<keyword id="KW-0328">Glycosyltransferase</keyword>
<keyword id="KW-0441">Lipid A biosynthesis</keyword>
<keyword id="KW-0444">Lipid biosynthesis</keyword>
<keyword id="KW-0443">Lipid metabolism</keyword>
<keyword id="KW-0808">Transferase</keyword>
<name>LPXB_KLEP7</name>
<reference key="1">
    <citation type="submission" date="2006-09" db="EMBL/GenBank/DDBJ databases">
        <authorList>
            <consortium name="The Klebsiella pneumonia Genome Sequencing Project"/>
            <person name="McClelland M."/>
            <person name="Sanderson E.K."/>
            <person name="Spieth J."/>
            <person name="Clifton W.S."/>
            <person name="Latreille P."/>
            <person name="Sabo A."/>
            <person name="Pepin K."/>
            <person name="Bhonagiri V."/>
            <person name="Porwollik S."/>
            <person name="Ali J."/>
            <person name="Wilson R.K."/>
        </authorList>
    </citation>
    <scope>NUCLEOTIDE SEQUENCE [LARGE SCALE GENOMIC DNA]</scope>
    <source>
        <strain>ATCC 700721 / MGH 78578</strain>
    </source>
</reference>
<dbReference type="EC" id="2.4.1.182" evidence="1"/>
<dbReference type="EMBL" id="CP000647">
    <property type="protein sequence ID" value="ABR75655.1"/>
    <property type="molecule type" value="Genomic_DNA"/>
</dbReference>
<dbReference type="RefSeq" id="WP_002889374.1">
    <property type="nucleotide sequence ID" value="NC_009648.1"/>
</dbReference>
<dbReference type="SMR" id="A6T4Y4"/>
<dbReference type="STRING" id="272620.KPN_00195"/>
<dbReference type="CAZy" id="GT19">
    <property type="family name" value="Glycosyltransferase Family 19"/>
</dbReference>
<dbReference type="PaxDb" id="272620-KPN_00195"/>
<dbReference type="EnsemblBacteria" id="ABR75655">
    <property type="protein sequence ID" value="ABR75655"/>
    <property type="gene ID" value="KPN_00195"/>
</dbReference>
<dbReference type="KEGG" id="kpn:KPN_00195"/>
<dbReference type="HOGENOM" id="CLU_036577_3_0_6"/>
<dbReference type="UniPathway" id="UPA00359">
    <property type="reaction ID" value="UER00481"/>
</dbReference>
<dbReference type="Proteomes" id="UP000000265">
    <property type="component" value="Chromosome"/>
</dbReference>
<dbReference type="GO" id="GO:0016020">
    <property type="term" value="C:membrane"/>
    <property type="evidence" value="ECO:0007669"/>
    <property type="project" value="GOC"/>
</dbReference>
<dbReference type="GO" id="GO:0008915">
    <property type="term" value="F:lipid-A-disaccharide synthase activity"/>
    <property type="evidence" value="ECO:0007669"/>
    <property type="project" value="UniProtKB-UniRule"/>
</dbReference>
<dbReference type="GO" id="GO:0005543">
    <property type="term" value="F:phospholipid binding"/>
    <property type="evidence" value="ECO:0007669"/>
    <property type="project" value="TreeGrafter"/>
</dbReference>
<dbReference type="GO" id="GO:0009245">
    <property type="term" value="P:lipid A biosynthetic process"/>
    <property type="evidence" value="ECO:0007669"/>
    <property type="project" value="UniProtKB-UniRule"/>
</dbReference>
<dbReference type="CDD" id="cd01635">
    <property type="entry name" value="Glycosyltransferase_GTB-type"/>
    <property type="match status" value="1"/>
</dbReference>
<dbReference type="HAMAP" id="MF_00392">
    <property type="entry name" value="LpxB"/>
    <property type="match status" value="1"/>
</dbReference>
<dbReference type="InterPro" id="IPR003835">
    <property type="entry name" value="Glyco_trans_19"/>
</dbReference>
<dbReference type="NCBIfam" id="TIGR00215">
    <property type="entry name" value="lpxB"/>
    <property type="match status" value="1"/>
</dbReference>
<dbReference type="PANTHER" id="PTHR30372">
    <property type="entry name" value="LIPID-A-DISACCHARIDE SYNTHASE"/>
    <property type="match status" value="1"/>
</dbReference>
<dbReference type="PANTHER" id="PTHR30372:SF4">
    <property type="entry name" value="LIPID-A-DISACCHARIDE SYNTHASE, MITOCHONDRIAL-RELATED"/>
    <property type="match status" value="1"/>
</dbReference>
<dbReference type="Pfam" id="PF02684">
    <property type="entry name" value="LpxB"/>
    <property type="match status" value="1"/>
</dbReference>
<dbReference type="SUPFAM" id="SSF53756">
    <property type="entry name" value="UDP-Glycosyltransferase/glycogen phosphorylase"/>
    <property type="match status" value="1"/>
</dbReference>
<proteinExistence type="inferred from homology"/>
<evidence type="ECO:0000255" key="1">
    <source>
        <dbReference type="HAMAP-Rule" id="MF_00392"/>
    </source>
</evidence>
<gene>
    <name evidence="1" type="primary">lpxB</name>
    <name type="ordered locus">KPN78578_01940</name>
    <name type="ORF">KPN_00195</name>
</gene>
<protein>
    <recommendedName>
        <fullName evidence="1">Lipid-A-disaccharide synthase</fullName>
        <ecNumber evidence="1">2.4.1.182</ecNumber>
    </recommendedName>
</protein>
<feature type="chain" id="PRO_1000049403" description="Lipid-A-disaccharide synthase">
    <location>
        <begin position="1"/>
        <end position="383"/>
    </location>
</feature>
<comment type="function">
    <text evidence="1">Condensation of UDP-2,3-diacylglucosamine and 2,3-diacylglucosamine-1-phosphate to form lipid A disaccharide, a precursor of lipid A, a phosphorylated glycolipid that anchors the lipopolysaccharide to the outer membrane of the cell.</text>
</comment>
<comment type="catalytic activity">
    <reaction evidence="1">
        <text>2-N,3-O-bis[(3R)-3-hydroxytetradecanoyl]-alpha-D-glucosaminyl 1-phosphate + UDP-2-N,3-O-bis[(3R)-3-hydroxytetradecanoyl]-alpha-D-glucosamine = lipid A disaccharide (E. coli) + UDP + H(+)</text>
        <dbReference type="Rhea" id="RHEA:22668"/>
        <dbReference type="ChEBI" id="CHEBI:15378"/>
        <dbReference type="ChEBI" id="CHEBI:57957"/>
        <dbReference type="ChEBI" id="CHEBI:58223"/>
        <dbReference type="ChEBI" id="CHEBI:58466"/>
        <dbReference type="ChEBI" id="CHEBI:78847"/>
    </reaction>
</comment>
<comment type="catalytic activity">
    <reaction evidence="1">
        <text>a lipid X + a UDP-2-N,3-O-bis[(3R)-3-hydroxyacyl]-alpha-D-glucosamine = a lipid A disaccharide + UDP + H(+)</text>
        <dbReference type="Rhea" id="RHEA:67828"/>
        <dbReference type="ChEBI" id="CHEBI:15378"/>
        <dbReference type="ChEBI" id="CHEBI:58223"/>
        <dbReference type="ChEBI" id="CHEBI:137748"/>
        <dbReference type="ChEBI" id="CHEBI:176338"/>
        <dbReference type="ChEBI" id="CHEBI:176343"/>
        <dbReference type="EC" id="2.4.1.182"/>
    </reaction>
</comment>
<comment type="pathway">
    <text evidence="1">Glycolipid biosynthesis; lipid IV(A) biosynthesis; lipid IV(A) from (3R)-3-hydroxytetradecanoyl-[acyl-carrier-protein] and UDP-N-acetyl-alpha-D-glucosamine: step 5/6.</text>
</comment>
<comment type="similarity">
    <text evidence="1">Belongs to the LpxB family.</text>
</comment>
<accession>A6T4Y4</accession>
<organism>
    <name type="scientific">Klebsiella pneumoniae subsp. pneumoniae (strain ATCC 700721 / MGH 78578)</name>
    <dbReference type="NCBI Taxonomy" id="272620"/>
    <lineage>
        <taxon>Bacteria</taxon>
        <taxon>Pseudomonadati</taxon>
        <taxon>Pseudomonadota</taxon>
        <taxon>Gammaproteobacteria</taxon>
        <taxon>Enterobacterales</taxon>
        <taxon>Enterobacteriaceae</taxon>
        <taxon>Klebsiella/Raoultella group</taxon>
        <taxon>Klebsiella</taxon>
        <taxon>Klebsiella pneumoniae complex</taxon>
    </lineage>
</organism>
<sequence>MAEQRPLTIALVAGETSGDILGAGLIRALKARIPNARFVGVAGPLMQAEGCEAWYEMEELAVMGIVEVLGRLRRLLHIRADLTRRFGELRPDVFVGIDAPDFNITLEGNLKKQGIKTIHYVSPSVWAWRQKRVFKIGRSTDLVLAFLPFEKAFYDKFNVPCRFIGHTMADAMPLDPDKGAARDRLGIPHSVRCLALLPGSRGAEVEMLSADFLKTAQLLRATYPDLQVVVPLVNAKRREQFERIKAETAPDMIVHMLDGQARDAMIASDAALLASGTAALECMLAKCPMVVGYRMKPFTFWLAKRLVKTDYVSLPNLLAGRELVKELLQDECEPQALAAALQPLLADGKTSHEMHETFRALHQQIRCNADEQAADAVLELAKQ</sequence>